<dbReference type="EC" id="2.1.1.-"/>
<dbReference type="EMBL" id="CP000854">
    <property type="protein sequence ID" value="ACC43254.1"/>
    <property type="molecule type" value="Genomic_DNA"/>
</dbReference>
<dbReference type="RefSeq" id="WP_012396384.1">
    <property type="nucleotide sequence ID" value="NC_010612.1"/>
</dbReference>
<dbReference type="SMR" id="B2HGZ9"/>
<dbReference type="STRING" id="216594.MMAR_4850"/>
<dbReference type="KEGG" id="mmi:MMAR_4850"/>
<dbReference type="eggNOG" id="COG3315">
    <property type="taxonomic scope" value="Bacteria"/>
</dbReference>
<dbReference type="HOGENOM" id="CLU_056160_2_1_11"/>
<dbReference type="OrthoDB" id="9806164at2"/>
<dbReference type="Proteomes" id="UP000001190">
    <property type="component" value="Chromosome"/>
</dbReference>
<dbReference type="GO" id="GO:0008168">
    <property type="term" value="F:methyltransferase activity"/>
    <property type="evidence" value="ECO:0007669"/>
    <property type="project" value="UniProtKB-KW"/>
</dbReference>
<dbReference type="GO" id="GO:0032259">
    <property type="term" value="P:methylation"/>
    <property type="evidence" value="ECO:0007669"/>
    <property type="project" value="UniProtKB-KW"/>
</dbReference>
<dbReference type="FunFam" id="3.40.50.150:FF:000152">
    <property type="entry name" value="S-adenosyl-L-methionine-dependent methyltransferase"/>
    <property type="match status" value="1"/>
</dbReference>
<dbReference type="Gene3D" id="3.40.50.150">
    <property type="entry name" value="Vaccinia Virus protein VP39"/>
    <property type="match status" value="1"/>
</dbReference>
<dbReference type="InterPro" id="IPR007213">
    <property type="entry name" value="Ppm1/Ppm2/Tcmp"/>
</dbReference>
<dbReference type="InterPro" id="IPR029063">
    <property type="entry name" value="SAM-dependent_MTases_sf"/>
</dbReference>
<dbReference type="InterPro" id="IPR011610">
    <property type="entry name" value="SAM_mthyl_Trfase_ML2640-like"/>
</dbReference>
<dbReference type="NCBIfam" id="TIGR00027">
    <property type="entry name" value="mthyl_TIGR00027"/>
    <property type="match status" value="1"/>
</dbReference>
<dbReference type="PANTHER" id="PTHR43619">
    <property type="entry name" value="S-ADENOSYL-L-METHIONINE-DEPENDENT METHYLTRANSFERASE YKTD-RELATED"/>
    <property type="match status" value="1"/>
</dbReference>
<dbReference type="PANTHER" id="PTHR43619:SF2">
    <property type="entry name" value="S-ADENOSYL-L-METHIONINE-DEPENDENT METHYLTRANSFERASES SUPERFAMILY PROTEIN"/>
    <property type="match status" value="1"/>
</dbReference>
<dbReference type="Pfam" id="PF04072">
    <property type="entry name" value="LCM"/>
    <property type="match status" value="1"/>
</dbReference>
<dbReference type="SUPFAM" id="SSF53335">
    <property type="entry name" value="S-adenosyl-L-methionine-dependent methyltransferases"/>
    <property type="match status" value="1"/>
</dbReference>
<accession>B2HGZ9</accession>
<reference key="1">
    <citation type="journal article" date="2008" name="Genome Res.">
        <title>Insights from the complete genome sequence of Mycobacterium marinum on the evolution of Mycobacterium tuberculosis.</title>
        <authorList>
            <person name="Stinear T.P."/>
            <person name="Seemann T."/>
            <person name="Harrison P.F."/>
            <person name="Jenkin G.A."/>
            <person name="Davies J.K."/>
            <person name="Johnson P.D."/>
            <person name="Abdellah Z."/>
            <person name="Arrowsmith C."/>
            <person name="Chillingworth T."/>
            <person name="Churcher C."/>
            <person name="Clarke K."/>
            <person name="Cronin A."/>
            <person name="Davis P."/>
            <person name="Goodhead I."/>
            <person name="Holroyd N."/>
            <person name="Jagels K."/>
            <person name="Lord A."/>
            <person name="Moule S."/>
            <person name="Mungall K."/>
            <person name="Norbertczak H."/>
            <person name="Quail M.A."/>
            <person name="Rabbinowitsch E."/>
            <person name="Walker D."/>
            <person name="White B."/>
            <person name="Whitehead S."/>
            <person name="Small P.L."/>
            <person name="Brosch R."/>
            <person name="Ramakrishnan L."/>
            <person name="Fischbach M.A."/>
            <person name="Parkhill J."/>
            <person name="Cole S.T."/>
        </authorList>
    </citation>
    <scope>NUCLEOTIDE SEQUENCE [LARGE SCALE GENOMIC DNA]</scope>
    <source>
        <strain>ATCC BAA-535 / M</strain>
    </source>
</reference>
<proteinExistence type="inferred from homology"/>
<sequence>MVRTDRDRWDLATSVGATATMVAAQRALAADPQYALIDDPYAAPLVRAVGIDVYTRLVNGQIPVDVESGFDPARMAEAMACRTRFYDQFFVEATRSGISQVVILASGLDARAYRLDWPAGTVVYEVDMPEVIEFKTLTLADLGAEPTAERRTVAVDLRDDWAAALQAAGFDKDVPSAWSAEGLLVYLPDDAQDALFDNITALSATGSRLAFEFVPDTAVFNDERWRSHHARMSELGFEIDFNDLVYHGQRSHVIDHLARDGWQSASHTAKELHAANGFDYPDDDIAAVFADITYTSAVLGR</sequence>
<evidence type="ECO:0000250" key="1"/>
<evidence type="ECO:0000305" key="2"/>
<organism>
    <name type="scientific">Mycobacterium marinum (strain ATCC BAA-535 / M)</name>
    <dbReference type="NCBI Taxonomy" id="216594"/>
    <lineage>
        <taxon>Bacteria</taxon>
        <taxon>Bacillati</taxon>
        <taxon>Actinomycetota</taxon>
        <taxon>Actinomycetes</taxon>
        <taxon>Mycobacteriales</taxon>
        <taxon>Mycobacteriaceae</taxon>
        <taxon>Mycobacterium</taxon>
        <taxon>Mycobacterium ulcerans group</taxon>
    </lineage>
</organism>
<gene>
    <name type="ordered locus">MMAR_4850</name>
</gene>
<keyword id="KW-0489">Methyltransferase</keyword>
<keyword id="KW-1185">Reference proteome</keyword>
<keyword id="KW-0949">S-adenosyl-L-methionine</keyword>
<keyword id="KW-0808">Transferase</keyword>
<name>Y4850_MYCMM</name>
<feature type="chain" id="PRO_0000361172" description="Putative S-adenosyl-L-methionine-dependent methyltransferase MMAR_4850">
    <location>
        <begin position="1"/>
        <end position="301"/>
    </location>
</feature>
<feature type="binding site" evidence="1">
    <location>
        <position position="127"/>
    </location>
    <ligand>
        <name>S-adenosyl-L-methionine</name>
        <dbReference type="ChEBI" id="CHEBI:59789"/>
    </ligand>
</feature>
<feature type="binding site" evidence="1">
    <location>
        <begin position="156"/>
        <end position="157"/>
    </location>
    <ligand>
        <name>S-adenosyl-L-methionine</name>
        <dbReference type="ChEBI" id="CHEBI:59789"/>
    </ligand>
</feature>
<protein>
    <recommendedName>
        <fullName>Putative S-adenosyl-L-methionine-dependent methyltransferase MMAR_4850</fullName>
        <ecNumber>2.1.1.-</ecNumber>
    </recommendedName>
</protein>
<comment type="function">
    <text evidence="1">Exhibits S-adenosyl-L-methionine-dependent methyltransferase activity.</text>
</comment>
<comment type="similarity">
    <text evidence="2">Belongs to the UPF0677 family.</text>
</comment>